<evidence type="ECO:0000250" key="1"/>
<evidence type="ECO:0000305" key="2"/>
<comment type="function">
    <text evidence="1">eIF-2 functions in the early steps of protein synthesis by forming a ternary complex with GTP and initiator tRNA.</text>
</comment>
<comment type="subunit">
    <text evidence="1">Heterotrimer composed of an alpha, a beta and a gamma chain.</text>
</comment>
<comment type="similarity">
    <text evidence="2">Belongs to the eIF-2-beta/eIF-5 family.</text>
</comment>
<feature type="chain" id="PRO_0000137417" description="Translation initiation factor 2 subunit beta">
    <location>
        <begin position="1"/>
        <end position="137"/>
    </location>
</feature>
<accession>O27958</accession>
<reference key="1">
    <citation type="journal article" date="1997" name="Nature">
        <title>The complete genome sequence of the hyperthermophilic, sulphate-reducing archaeon Archaeoglobus fulgidus.</title>
        <authorList>
            <person name="Klenk H.-P."/>
            <person name="Clayton R.A."/>
            <person name="Tomb J.-F."/>
            <person name="White O."/>
            <person name="Nelson K.E."/>
            <person name="Ketchum K.A."/>
            <person name="Dodson R.J."/>
            <person name="Gwinn M.L."/>
            <person name="Hickey E.K."/>
            <person name="Peterson J.D."/>
            <person name="Richardson D.L."/>
            <person name="Kerlavage A.R."/>
            <person name="Graham D.E."/>
            <person name="Kyrpides N.C."/>
            <person name="Fleischmann R.D."/>
            <person name="Quackenbush J."/>
            <person name="Lee N.H."/>
            <person name="Sutton G.G."/>
            <person name="Gill S.R."/>
            <person name="Kirkness E.F."/>
            <person name="Dougherty B.A."/>
            <person name="McKenney K."/>
            <person name="Adams M.D."/>
            <person name="Loftus B.J."/>
            <person name="Peterson S.N."/>
            <person name="Reich C.I."/>
            <person name="McNeil L.K."/>
            <person name="Badger J.H."/>
            <person name="Glodek A."/>
            <person name="Zhou L."/>
            <person name="Overbeek R."/>
            <person name="Gocayne J.D."/>
            <person name="Weidman J.F."/>
            <person name="McDonald L.A."/>
            <person name="Utterback T.R."/>
            <person name="Cotton M.D."/>
            <person name="Spriggs T."/>
            <person name="Artiach P."/>
            <person name="Kaine B.P."/>
            <person name="Sykes S.M."/>
            <person name="Sadow P.W."/>
            <person name="D'Andrea K.P."/>
            <person name="Bowman C."/>
            <person name="Fujii C."/>
            <person name="Garland S.A."/>
            <person name="Mason T.M."/>
            <person name="Olsen G.J."/>
            <person name="Fraser C.M."/>
            <person name="Smith H.O."/>
            <person name="Woese C.R."/>
            <person name="Venter J.C."/>
        </authorList>
    </citation>
    <scope>NUCLEOTIDE SEQUENCE [LARGE SCALE GENOMIC DNA]</scope>
    <source>
        <strain>ATCC 49558 / DSM 4304 / JCM 9628 / NBRC 100126 / VC-16</strain>
    </source>
</reference>
<keyword id="KW-0396">Initiation factor</keyword>
<keyword id="KW-0648">Protein biosynthesis</keyword>
<keyword id="KW-1185">Reference proteome</keyword>
<sequence>MMRSYEELLERAFEKLADKDVVRRERFEIPRVSIQREGARTILKNFSQIAKTLNRSEDHLYKYIVKSLGTAGFIDNGRLVLQGKFTESELQKEVDDYVRLYVLCRECNSPDTEFIKEERVLMLRCLACGAKHPVRNI</sequence>
<organism>
    <name type="scientific">Archaeoglobus fulgidus (strain ATCC 49558 / DSM 4304 / JCM 9628 / NBRC 100126 / VC-16)</name>
    <dbReference type="NCBI Taxonomy" id="224325"/>
    <lineage>
        <taxon>Archaea</taxon>
        <taxon>Methanobacteriati</taxon>
        <taxon>Methanobacteriota</taxon>
        <taxon>Archaeoglobi</taxon>
        <taxon>Archaeoglobales</taxon>
        <taxon>Archaeoglobaceae</taxon>
        <taxon>Archaeoglobus</taxon>
    </lineage>
</organism>
<gene>
    <name type="primary">eif2b</name>
    <name type="ordered locus">AF_2326</name>
</gene>
<name>IF2B_ARCFU</name>
<protein>
    <recommendedName>
        <fullName>Translation initiation factor 2 subunit beta</fullName>
    </recommendedName>
    <alternativeName>
        <fullName>aIF2-beta</fullName>
    </alternativeName>
    <alternativeName>
        <fullName>eIF-2-beta</fullName>
    </alternativeName>
</protein>
<dbReference type="EMBL" id="AE000782">
    <property type="protein sequence ID" value="AAB88931.1"/>
    <property type="molecule type" value="Genomic_DNA"/>
</dbReference>
<dbReference type="PIR" id="F69540">
    <property type="entry name" value="F69540"/>
</dbReference>
<dbReference type="SMR" id="O27958"/>
<dbReference type="STRING" id="224325.AF_2326"/>
<dbReference type="PaxDb" id="224325-AF_2326"/>
<dbReference type="EnsemblBacteria" id="AAB88931">
    <property type="protein sequence ID" value="AAB88931"/>
    <property type="gene ID" value="AF_2326"/>
</dbReference>
<dbReference type="KEGG" id="afu:AF_2326"/>
<dbReference type="eggNOG" id="arCOG01640">
    <property type="taxonomic scope" value="Archaea"/>
</dbReference>
<dbReference type="HOGENOM" id="CLU_026663_3_1_2"/>
<dbReference type="PhylomeDB" id="O27958"/>
<dbReference type="Proteomes" id="UP000002199">
    <property type="component" value="Chromosome"/>
</dbReference>
<dbReference type="GO" id="GO:0003743">
    <property type="term" value="F:translation initiation factor activity"/>
    <property type="evidence" value="ECO:0007669"/>
    <property type="project" value="UniProtKB-UniRule"/>
</dbReference>
<dbReference type="FunFam" id="3.30.30.170:FF:000001">
    <property type="entry name" value="Eukaryotic translation initiation factor 2 subunit"/>
    <property type="match status" value="1"/>
</dbReference>
<dbReference type="Gene3D" id="3.30.30.170">
    <property type="match status" value="1"/>
</dbReference>
<dbReference type="HAMAP" id="MF_00232">
    <property type="entry name" value="eIF_2_beta"/>
    <property type="match status" value="1"/>
</dbReference>
<dbReference type="InterPro" id="IPR045196">
    <property type="entry name" value="IF2/IF5"/>
</dbReference>
<dbReference type="InterPro" id="IPR004458">
    <property type="entry name" value="TIF2_bsu_arc"/>
</dbReference>
<dbReference type="InterPro" id="IPR002735">
    <property type="entry name" value="Transl_init_fac_IF2/IF5_dom"/>
</dbReference>
<dbReference type="InterPro" id="IPR016189">
    <property type="entry name" value="Transl_init_fac_IF2/IF5_N"/>
</dbReference>
<dbReference type="InterPro" id="IPR016190">
    <property type="entry name" value="Transl_init_fac_IF2/IF5_Zn-bd"/>
</dbReference>
<dbReference type="NCBIfam" id="TIGR00311">
    <property type="entry name" value="aIF-2beta"/>
    <property type="match status" value="1"/>
</dbReference>
<dbReference type="NCBIfam" id="NF003067">
    <property type="entry name" value="PRK03988.1"/>
    <property type="match status" value="1"/>
</dbReference>
<dbReference type="PANTHER" id="PTHR23001">
    <property type="entry name" value="EUKARYOTIC TRANSLATION INITIATION FACTOR"/>
    <property type="match status" value="1"/>
</dbReference>
<dbReference type="PANTHER" id="PTHR23001:SF3">
    <property type="entry name" value="EUKARYOTIC TRANSLATION INITIATION FACTOR 2 SUBUNIT 2"/>
    <property type="match status" value="1"/>
</dbReference>
<dbReference type="Pfam" id="PF01873">
    <property type="entry name" value="eIF-5_eIF-2B"/>
    <property type="match status" value="1"/>
</dbReference>
<dbReference type="SMART" id="SM00653">
    <property type="entry name" value="eIF2B_5"/>
    <property type="match status" value="1"/>
</dbReference>
<dbReference type="SUPFAM" id="SSF100966">
    <property type="entry name" value="Translation initiation factor 2 beta, aIF2beta, N-terminal domain"/>
    <property type="match status" value="1"/>
</dbReference>
<dbReference type="SUPFAM" id="SSF75689">
    <property type="entry name" value="Zinc-binding domain of translation initiation factor 2 beta"/>
    <property type="match status" value="1"/>
</dbReference>
<proteinExistence type="inferred from homology"/>